<accession>Q1R8T1</accession>
<name>EUTC_ECOUT</name>
<proteinExistence type="inferred from homology"/>
<comment type="function">
    <text evidence="1">Catalyzes the deamination of various vicinal amino-alcohols to oxo compounds. Allows this organism to utilize ethanolamine as the sole source of nitrogen and carbon in the presence of external vitamin B12.</text>
</comment>
<comment type="catalytic activity">
    <reaction evidence="1">
        <text>ethanolamine = acetaldehyde + NH4(+)</text>
        <dbReference type="Rhea" id="RHEA:15313"/>
        <dbReference type="ChEBI" id="CHEBI:15343"/>
        <dbReference type="ChEBI" id="CHEBI:28938"/>
        <dbReference type="ChEBI" id="CHEBI:57603"/>
        <dbReference type="EC" id="4.3.1.7"/>
    </reaction>
</comment>
<comment type="cofactor">
    <cofactor evidence="1">
        <name>adenosylcob(III)alamin</name>
        <dbReference type="ChEBI" id="CHEBI:18408"/>
    </cofactor>
    <text evidence="1">Binds between the large and small subunits.</text>
</comment>
<comment type="pathway">
    <text evidence="1">Amine and polyamine degradation; ethanolamine degradation.</text>
</comment>
<comment type="subunit">
    <text evidence="1">The basic unit is a heterodimer which dimerizes to form tetramers. The heterotetramers trimerize; 6 large subunits form a core ring with 6 small subunits projecting outwards.</text>
</comment>
<comment type="subcellular location">
    <subcellularLocation>
        <location evidence="1">Bacterial microcompartment</location>
    </subcellularLocation>
</comment>
<comment type="similarity">
    <text evidence="1">Belongs to the EutC family.</text>
</comment>
<protein>
    <recommendedName>
        <fullName evidence="1">Ethanolamine ammonia-lyase small subunit</fullName>
        <shortName evidence="1">EAL small subunit</shortName>
        <ecNumber evidence="1">4.3.1.7</ecNumber>
    </recommendedName>
</protein>
<organism>
    <name type="scientific">Escherichia coli (strain UTI89 / UPEC)</name>
    <dbReference type="NCBI Taxonomy" id="364106"/>
    <lineage>
        <taxon>Bacteria</taxon>
        <taxon>Pseudomonadati</taxon>
        <taxon>Pseudomonadota</taxon>
        <taxon>Gammaproteobacteria</taxon>
        <taxon>Enterobacterales</taxon>
        <taxon>Enterobacteriaceae</taxon>
        <taxon>Escherichia</taxon>
    </lineage>
</organism>
<evidence type="ECO:0000255" key="1">
    <source>
        <dbReference type="HAMAP-Rule" id="MF_00601"/>
    </source>
</evidence>
<sequence>MDQKQIEEIVRSVMASMGQAAPAPSEAKCATTNCAAPVTSESCALDLGSAEAKAWIGVENPHRADVLTELRRSTVARVCTGRAGPRPRTQALLRFLADHSRSKDTVLKEVPEEWVKAQGLLEVRSEISDKNLYLTRPDMGRRLCAEAVEALKAQCVANPDVQVVISDGLSTDAITVNYEEILPPLMAGLKQAGLKVGTPFFVRYGRVKIEDQIGEILGAKVVILLVGERPGLGQSESLSCYAVYSPRMATTVEADRTCISNIHQGGTPPVEAAAVIVDLAKRMLEQKASGINMTR</sequence>
<reference key="1">
    <citation type="journal article" date="2006" name="Proc. Natl. Acad. Sci. U.S.A.">
        <title>Identification of genes subject to positive selection in uropathogenic strains of Escherichia coli: a comparative genomics approach.</title>
        <authorList>
            <person name="Chen S.L."/>
            <person name="Hung C.-S."/>
            <person name="Xu J."/>
            <person name="Reigstad C.S."/>
            <person name="Magrini V."/>
            <person name="Sabo A."/>
            <person name="Blasiar D."/>
            <person name="Bieri T."/>
            <person name="Meyer R.R."/>
            <person name="Ozersky P."/>
            <person name="Armstrong J.R."/>
            <person name="Fulton R.S."/>
            <person name="Latreille J.P."/>
            <person name="Spieth J."/>
            <person name="Hooton T.M."/>
            <person name="Mardis E.R."/>
            <person name="Hultgren S.J."/>
            <person name="Gordon J.I."/>
        </authorList>
    </citation>
    <scope>NUCLEOTIDE SEQUENCE [LARGE SCALE GENOMIC DNA]</scope>
    <source>
        <strain>UTI89 / UPEC</strain>
    </source>
</reference>
<feature type="chain" id="PRO_1000025855" description="Ethanolamine ammonia-lyase small subunit">
    <location>
        <begin position="1"/>
        <end position="295"/>
    </location>
</feature>
<feature type="binding site" evidence="1">
    <location>
        <position position="207"/>
    </location>
    <ligand>
        <name>adenosylcob(III)alamin</name>
        <dbReference type="ChEBI" id="CHEBI:18408"/>
    </ligand>
</feature>
<feature type="binding site" evidence="1">
    <location>
        <position position="228"/>
    </location>
    <ligand>
        <name>adenosylcob(III)alamin</name>
        <dbReference type="ChEBI" id="CHEBI:18408"/>
    </ligand>
</feature>
<feature type="binding site" evidence="1">
    <location>
        <position position="258"/>
    </location>
    <ligand>
        <name>adenosylcob(III)alamin</name>
        <dbReference type="ChEBI" id="CHEBI:18408"/>
    </ligand>
</feature>
<keyword id="KW-1283">Bacterial microcompartment</keyword>
<keyword id="KW-0846">Cobalamin</keyword>
<keyword id="KW-0170">Cobalt</keyword>
<keyword id="KW-0456">Lyase</keyword>
<dbReference type="EC" id="4.3.1.7" evidence="1"/>
<dbReference type="EMBL" id="CP000243">
    <property type="protein sequence ID" value="ABE08233.1"/>
    <property type="molecule type" value="Genomic_DNA"/>
</dbReference>
<dbReference type="RefSeq" id="WP_000372316.1">
    <property type="nucleotide sequence ID" value="NZ_CP064825.1"/>
</dbReference>
<dbReference type="SMR" id="Q1R8T1"/>
<dbReference type="KEGG" id="eci:UTI89_C2773"/>
<dbReference type="HOGENOM" id="CLU_068224_0_0_6"/>
<dbReference type="UniPathway" id="UPA00560"/>
<dbReference type="Proteomes" id="UP000001952">
    <property type="component" value="Chromosome"/>
</dbReference>
<dbReference type="GO" id="GO:0009350">
    <property type="term" value="C:ethanolamine ammonia-lyase complex"/>
    <property type="evidence" value="ECO:0007669"/>
    <property type="project" value="UniProtKB-UniRule"/>
</dbReference>
<dbReference type="GO" id="GO:0031471">
    <property type="term" value="C:ethanolamine degradation polyhedral organelle"/>
    <property type="evidence" value="ECO:0007669"/>
    <property type="project" value="UniProtKB-UniRule"/>
</dbReference>
<dbReference type="GO" id="GO:0031419">
    <property type="term" value="F:cobalamin binding"/>
    <property type="evidence" value="ECO:0007669"/>
    <property type="project" value="UniProtKB-UniRule"/>
</dbReference>
<dbReference type="GO" id="GO:0008851">
    <property type="term" value="F:ethanolamine ammonia-lyase activity"/>
    <property type="evidence" value="ECO:0007669"/>
    <property type="project" value="UniProtKB-UniRule"/>
</dbReference>
<dbReference type="GO" id="GO:0006520">
    <property type="term" value="P:amino acid metabolic process"/>
    <property type="evidence" value="ECO:0007669"/>
    <property type="project" value="InterPro"/>
</dbReference>
<dbReference type="GO" id="GO:0046336">
    <property type="term" value="P:ethanolamine catabolic process"/>
    <property type="evidence" value="ECO:0007669"/>
    <property type="project" value="UniProtKB-UniRule"/>
</dbReference>
<dbReference type="FunFam" id="3.40.50.11240:FF:000001">
    <property type="entry name" value="Ethanolamine ammonia-lyase light chain"/>
    <property type="match status" value="1"/>
</dbReference>
<dbReference type="Gene3D" id="6.10.140.690">
    <property type="match status" value="1"/>
</dbReference>
<dbReference type="Gene3D" id="6.10.250.2060">
    <property type="match status" value="1"/>
</dbReference>
<dbReference type="Gene3D" id="3.40.50.11240">
    <property type="entry name" value="Ethanolamine ammonia-lyase light chain (EutC)"/>
    <property type="match status" value="1"/>
</dbReference>
<dbReference type="HAMAP" id="MF_00601">
    <property type="entry name" value="EutC"/>
    <property type="match status" value="1"/>
</dbReference>
<dbReference type="InterPro" id="IPR009246">
    <property type="entry name" value="EutC"/>
</dbReference>
<dbReference type="InterPro" id="IPR042251">
    <property type="entry name" value="EutC_C"/>
</dbReference>
<dbReference type="NCBIfam" id="NF003971">
    <property type="entry name" value="PRK05465.1"/>
    <property type="match status" value="1"/>
</dbReference>
<dbReference type="PANTHER" id="PTHR39330">
    <property type="entry name" value="ETHANOLAMINE AMMONIA-LYASE LIGHT CHAIN"/>
    <property type="match status" value="1"/>
</dbReference>
<dbReference type="PANTHER" id="PTHR39330:SF1">
    <property type="entry name" value="ETHANOLAMINE AMMONIA-LYASE SMALL SUBUNIT"/>
    <property type="match status" value="1"/>
</dbReference>
<dbReference type="Pfam" id="PF05985">
    <property type="entry name" value="EutC"/>
    <property type="match status" value="1"/>
</dbReference>
<dbReference type="PIRSF" id="PIRSF018982">
    <property type="entry name" value="EutC"/>
    <property type="match status" value="1"/>
</dbReference>
<gene>
    <name evidence="1" type="primary">eutC</name>
    <name type="ordered locus">UTI89_C2773</name>
</gene>